<proteinExistence type="inferred from homology"/>
<keyword id="KW-0067">ATP-binding</keyword>
<keyword id="KW-0963">Cytoplasm</keyword>
<keyword id="KW-1015">Disulfide bond</keyword>
<keyword id="KW-0547">Nucleotide-binding</keyword>
<keyword id="KW-1185">Reference proteome</keyword>
<keyword id="KW-0694">RNA-binding</keyword>
<keyword id="KW-0808">Transferase</keyword>
<keyword id="KW-0819">tRNA processing</keyword>
<keyword id="KW-0820">tRNA-binding</keyword>
<feature type="chain" id="PRO_0000349688" description="tRNA-specific 2-thiouridylase MnmA">
    <location>
        <begin position="1"/>
        <end position="358"/>
    </location>
</feature>
<feature type="region of interest" description="Interaction with tRNA" evidence="1">
    <location>
        <begin position="152"/>
        <end position="154"/>
    </location>
</feature>
<feature type="region of interest" description="Interaction with tRNA" evidence="1">
    <location>
        <begin position="308"/>
        <end position="309"/>
    </location>
</feature>
<feature type="active site" description="Nucleophile" evidence="1">
    <location>
        <position position="105"/>
    </location>
</feature>
<feature type="active site" description="Cysteine persulfide intermediate" evidence="1">
    <location>
        <position position="202"/>
    </location>
</feature>
<feature type="binding site" evidence="1">
    <location>
        <begin position="10"/>
        <end position="17"/>
    </location>
    <ligand>
        <name>ATP</name>
        <dbReference type="ChEBI" id="CHEBI:30616"/>
    </ligand>
</feature>
<feature type="binding site" evidence="1">
    <location>
        <position position="36"/>
    </location>
    <ligand>
        <name>ATP</name>
        <dbReference type="ChEBI" id="CHEBI:30616"/>
    </ligand>
</feature>
<feature type="binding site" evidence="1">
    <location>
        <position position="129"/>
    </location>
    <ligand>
        <name>ATP</name>
        <dbReference type="ChEBI" id="CHEBI:30616"/>
    </ligand>
</feature>
<feature type="site" description="Interaction with tRNA" evidence="1">
    <location>
        <position position="130"/>
    </location>
</feature>
<feature type="site" description="Interaction with tRNA" evidence="1">
    <location>
        <position position="341"/>
    </location>
</feature>
<feature type="disulfide bond" description="Alternate" evidence="1">
    <location>
        <begin position="105"/>
        <end position="202"/>
    </location>
</feature>
<protein>
    <recommendedName>
        <fullName evidence="1">tRNA-specific 2-thiouridylase MnmA</fullName>
        <ecNumber evidence="1">2.8.1.13</ecNumber>
    </recommendedName>
</protein>
<comment type="function">
    <text evidence="1">Catalyzes the 2-thiolation of uridine at the wobble position (U34) of tRNA, leading to the formation of s(2)U34.</text>
</comment>
<comment type="catalytic activity">
    <reaction evidence="1">
        <text>S-sulfanyl-L-cysteinyl-[protein] + uridine(34) in tRNA + AH2 + ATP = 2-thiouridine(34) in tRNA + L-cysteinyl-[protein] + A + AMP + diphosphate + H(+)</text>
        <dbReference type="Rhea" id="RHEA:47032"/>
        <dbReference type="Rhea" id="RHEA-COMP:10131"/>
        <dbReference type="Rhea" id="RHEA-COMP:11726"/>
        <dbReference type="Rhea" id="RHEA-COMP:11727"/>
        <dbReference type="Rhea" id="RHEA-COMP:11728"/>
        <dbReference type="ChEBI" id="CHEBI:13193"/>
        <dbReference type="ChEBI" id="CHEBI:15378"/>
        <dbReference type="ChEBI" id="CHEBI:17499"/>
        <dbReference type="ChEBI" id="CHEBI:29950"/>
        <dbReference type="ChEBI" id="CHEBI:30616"/>
        <dbReference type="ChEBI" id="CHEBI:33019"/>
        <dbReference type="ChEBI" id="CHEBI:61963"/>
        <dbReference type="ChEBI" id="CHEBI:65315"/>
        <dbReference type="ChEBI" id="CHEBI:87170"/>
        <dbReference type="ChEBI" id="CHEBI:456215"/>
        <dbReference type="EC" id="2.8.1.13"/>
    </reaction>
</comment>
<comment type="subcellular location">
    <subcellularLocation>
        <location evidence="1">Cytoplasm</location>
    </subcellularLocation>
</comment>
<comment type="similarity">
    <text evidence="1">Belongs to the MnmA/TRMU family.</text>
</comment>
<sequence length="358" mass="39094">MTQPQRVAVAMSGGVDSSATAALLVEQGYEVIGLTMQLWDHSSPKVAGSRSCCALDDLYDARQVAQTLGIPYYVVNYEADFRQAVVDDFIQTYAAGQTPNPCVRCNQILKFDLLLKKALALGADFLATGHYAIRREDAQGVPQLWQGSDPAKDQSYFLFTTTMAQLAHVRFPLGEMDKQQTRQLAQRFGLHLSTKQESQDVCFVPDGDYSAFFAKQAPHLLTPGAIVDQQGHSLGQHKGLGCYTVGQRKGLGIAHPTPLYVLALDAPHNQVIVGPAEALYQQQLTLHHVNWLEPTPPTEPFASMAKIRYAAPPVEARVEPLPDGGAQIYFNQPQRAITPGQACVFYDGARVVGGGWIV</sequence>
<accession>A0L678</accession>
<reference key="1">
    <citation type="journal article" date="2009" name="Appl. Environ. Microbiol.">
        <title>Complete genome sequence of the chemolithoautotrophic marine magnetotactic coccus strain MC-1.</title>
        <authorList>
            <person name="Schubbe S."/>
            <person name="Williams T.J."/>
            <person name="Xie G."/>
            <person name="Kiss H.E."/>
            <person name="Brettin T.S."/>
            <person name="Martinez D."/>
            <person name="Ross C.A."/>
            <person name="Schuler D."/>
            <person name="Cox B.L."/>
            <person name="Nealson K.H."/>
            <person name="Bazylinski D.A."/>
        </authorList>
    </citation>
    <scope>NUCLEOTIDE SEQUENCE [LARGE SCALE GENOMIC DNA]</scope>
    <source>
        <strain>ATCC BAA-1437 / JCM 17883 / MC-1</strain>
    </source>
</reference>
<organism>
    <name type="scientific">Magnetococcus marinus (strain ATCC BAA-1437 / JCM 17883 / MC-1)</name>
    <dbReference type="NCBI Taxonomy" id="156889"/>
    <lineage>
        <taxon>Bacteria</taxon>
        <taxon>Pseudomonadati</taxon>
        <taxon>Pseudomonadota</taxon>
        <taxon>Alphaproteobacteria</taxon>
        <taxon>Magnetococcales</taxon>
        <taxon>Magnetococcaceae</taxon>
        <taxon>Magnetococcus</taxon>
    </lineage>
</organism>
<evidence type="ECO:0000255" key="1">
    <source>
        <dbReference type="HAMAP-Rule" id="MF_00144"/>
    </source>
</evidence>
<dbReference type="EC" id="2.8.1.13" evidence="1"/>
<dbReference type="EMBL" id="CP000471">
    <property type="protein sequence ID" value="ABK43471.1"/>
    <property type="molecule type" value="Genomic_DNA"/>
</dbReference>
<dbReference type="RefSeq" id="WP_011712628.1">
    <property type="nucleotide sequence ID" value="NC_008576.1"/>
</dbReference>
<dbReference type="SMR" id="A0L678"/>
<dbReference type="STRING" id="156889.Mmc1_0953"/>
<dbReference type="KEGG" id="mgm:Mmc1_0953"/>
<dbReference type="eggNOG" id="COG0482">
    <property type="taxonomic scope" value="Bacteria"/>
</dbReference>
<dbReference type="HOGENOM" id="CLU_035188_0_0_5"/>
<dbReference type="OrthoDB" id="9800696at2"/>
<dbReference type="Proteomes" id="UP000002586">
    <property type="component" value="Chromosome"/>
</dbReference>
<dbReference type="GO" id="GO:0005737">
    <property type="term" value="C:cytoplasm"/>
    <property type="evidence" value="ECO:0007669"/>
    <property type="project" value="UniProtKB-SubCell"/>
</dbReference>
<dbReference type="GO" id="GO:0005524">
    <property type="term" value="F:ATP binding"/>
    <property type="evidence" value="ECO:0007669"/>
    <property type="project" value="UniProtKB-KW"/>
</dbReference>
<dbReference type="GO" id="GO:0000049">
    <property type="term" value="F:tRNA binding"/>
    <property type="evidence" value="ECO:0007669"/>
    <property type="project" value="UniProtKB-KW"/>
</dbReference>
<dbReference type="GO" id="GO:0103016">
    <property type="term" value="F:tRNA-uridine 2-sulfurtransferase activity"/>
    <property type="evidence" value="ECO:0007669"/>
    <property type="project" value="UniProtKB-EC"/>
</dbReference>
<dbReference type="GO" id="GO:0002143">
    <property type="term" value="P:tRNA wobble position uridine thiolation"/>
    <property type="evidence" value="ECO:0007669"/>
    <property type="project" value="TreeGrafter"/>
</dbReference>
<dbReference type="CDD" id="cd01998">
    <property type="entry name" value="MnmA_TRMU-like"/>
    <property type="match status" value="1"/>
</dbReference>
<dbReference type="FunFam" id="3.40.50.620:FF:000115">
    <property type="entry name" value="tRNA-specific 2-thiouridylase MnmA"/>
    <property type="match status" value="1"/>
</dbReference>
<dbReference type="Gene3D" id="2.30.30.280">
    <property type="entry name" value="Adenine nucleotide alpha hydrolases-like domains"/>
    <property type="match status" value="1"/>
</dbReference>
<dbReference type="Gene3D" id="3.40.50.620">
    <property type="entry name" value="HUPs"/>
    <property type="match status" value="1"/>
</dbReference>
<dbReference type="Gene3D" id="2.40.30.10">
    <property type="entry name" value="Translation factors"/>
    <property type="match status" value="1"/>
</dbReference>
<dbReference type="HAMAP" id="MF_00144">
    <property type="entry name" value="tRNA_thiouridyl_MnmA"/>
    <property type="match status" value="1"/>
</dbReference>
<dbReference type="InterPro" id="IPR004506">
    <property type="entry name" value="MnmA-like"/>
</dbReference>
<dbReference type="InterPro" id="IPR046885">
    <property type="entry name" value="MnmA-like_C"/>
</dbReference>
<dbReference type="InterPro" id="IPR046884">
    <property type="entry name" value="MnmA-like_central"/>
</dbReference>
<dbReference type="InterPro" id="IPR023382">
    <property type="entry name" value="MnmA-like_central_sf"/>
</dbReference>
<dbReference type="InterPro" id="IPR014729">
    <property type="entry name" value="Rossmann-like_a/b/a_fold"/>
</dbReference>
<dbReference type="NCBIfam" id="NF001138">
    <property type="entry name" value="PRK00143.1"/>
    <property type="match status" value="1"/>
</dbReference>
<dbReference type="NCBIfam" id="TIGR00420">
    <property type="entry name" value="trmU"/>
    <property type="match status" value="1"/>
</dbReference>
<dbReference type="PANTHER" id="PTHR11933:SF5">
    <property type="entry name" value="MITOCHONDRIAL TRNA-SPECIFIC 2-THIOURIDYLASE 1"/>
    <property type="match status" value="1"/>
</dbReference>
<dbReference type="PANTHER" id="PTHR11933">
    <property type="entry name" value="TRNA 5-METHYLAMINOMETHYL-2-THIOURIDYLATE -METHYLTRANSFERASE"/>
    <property type="match status" value="1"/>
</dbReference>
<dbReference type="Pfam" id="PF03054">
    <property type="entry name" value="tRNA_Me_trans"/>
    <property type="match status" value="1"/>
</dbReference>
<dbReference type="Pfam" id="PF20258">
    <property type="entry name" value="tRNA_Me_trans_C"/>
    <property type="match status" value="1"/>
</dbReference>
<dbReference type="Pfam" id="PF20259">
    <property type="entry name" value="tRNA_Me_trans_M"/>
    <property type="match status" value="1"/>
</dbReference>
<dbReference type="SUPFAM" id="SSF52402">
    <property type="entry name" value="Adenine nucleotide alpha hydrolases-like"/>
    <property type="match status" value="1"/>
</dbReference>
<gene>
    <name evidence="1" type="primary">mnmA</name>
    <name type="ordered locus">Mmc1_0953</name>
</gene>
<name>MNMA_MAGMM</name>